<name>AROK_SHIDS</name>
<gene>
    <name evidence="1" type="primary">aroK</name>
    <name type="ordered locus">SDY_3689</name>
</gene>
<accession>Q32AK2</accession>
<comment type="function">
    <text evidence="1">Catalyzes the specific phosphorylation of the 3-hydroxyl group of shikimic acid using ATP as a cosubstrate.</text>
</comment>
<comment type="catalytic activity">
    <reaction evidence="1">
        <text>shikimate + ATP = 3-phosphoshikimate + ADP + H(+)</text>
        <dbReference type="Rhea" id="RHEA:13121"/>
        <dbReference type="ChEBI" id="CHEBI:15378"/>
        <dbReference type="ChEBI" id="CHEBI:30616"/>
        <dbReference type="ChEBI" id="CHEBI:36208"/>
        <dbReference type="ChEBI" id="CHEBI:145989"/>
        <dbReference type="ChEBI" id="CHEBI:456216"/>
        <dbReference type="EC" id="2.7.1.71"/>
    </reaction>
</comment>
<comment type="cofactor">
    <cofactor evidence="1">
        <name>Mg(2+)</name>
        <dbReference type="ChEBI" id="CHEBI:18420"/>
    </cofactor>
    <text evidence="1">Binds 1 Mg(2+) ion per subunit.</text>
</comment>
<comment type="pathway">
    <text evidence="1">Metabolic intermediate biosynthesis; chorismate biosynthesis; chorismate from D-erythrose 4-phosphate and phosphoenolpyruvate: step 5/7.</text>
</comment>
<comment type="subunit">
    <text evidence="1">Monomer.</text>
</comment>
<comment type="subcellular location">
    <subcellularLocation>
        <location evidence="1">Cytoplasm</location>
    </subcellularLocation>
</comment>
<comment type="similarity">
    <text evidence="1">Belongs to the shikimate kinase family.</text>
</comment>
<organism>
    <name type="scientific">Shigella dysenteriae serotype 1 (strain Sd197)</name>
    <dbReference type="NCBI Taxonomy" id="300267"/>
    <lineage>
        <taxon>Bacteria</taxon>
        <taxon>Pseudomonadati</taxon>
        <taxon>Pseudomonadota</taxon>
        <taxon>Gammaproteobacteria</taxon>
        <taxon>Enterobacterales</taxon>
        <taxon>Enterobacteriaceae</taxon>
        <taxon>Shigella</taxon>
    </lineage>
</organism>
<feature type="chain" id="PRO_0000237931" description="Shikimate kinase 1">
    <location>
        <begin position="1"/>
        <end position="173"/>
    </location>
</feature>
<feature type="binding site" evidence="1">
    <location>
        <begin position="14"/>
        <end position="19"/>
    </location>
    <ligand>
        <name>ATP</name>
        <dbReference type="ChEBI" id="CHEBI:30616"/>
    </ligand>
</feature>
<feature type="binding site" evidence="1">
    <location>
        <position position="18"/>
    </location>
    <ligand>
        <name>Mg(2+)</name>
        <dbReference type="ChEBI" id="CHEBI:18420"/>
    </ligand>
</feature>
<feature type="binding site" evidence="1">
    <location>
        <position position="36"/>
    </location>
    <ligand>
        <name>substrate</name>
    </ligand>
</feature>
<feature type="binding site" evidence="1">
    <location>
        <position position="60"/>
    </location>
    <ligand>
        <name>substrate</name>
    </ligand>
</feature>
<feature type="binding site" evidence="1">
    <location>
        <position position="82"/>
    </location>
    <ligand>
        <name>substrate</name>
    </ligand>
</feature>
<feature type="binding site" evidence="1">
    <location>
        <position position="120"/>
    </location>
    <ligand>
        <name>ATP</name>
        <dbReference type="ChEBI" id="CHEBI:30616"/>
    </ligand>
</feature>
<feature type="binding site" evidence="1">
    <location>
        <position position="140"/>
    </location>
    <ligand>
        <name>substrate</name>
    </ligand>
</feature>
<feature type="binding site" evidence="1">
    <location>
        <position position="157"/>
    </location>
    <ligand>
        <name>ATP</name>
        <dbReference type="ChEBI" id="CHEBI:30616"/>
    </ligand>
</feature>
<protein>
    <recommendedName>
        <fullName evidence="1">Shikimate kinase 1</fullName>
        <shortName evidence="1">SK 1</shortName>
        <ecNumber evidence="1">2.7.1.71</ecNumber>
    </recommendedName>
</protein>
<dbReference type="EC" id="2.7.1.71" evidence="1"/>
<dbReference type="EMBL" id="CP000034">
    <property type="protein sequence ID" value="ABB63653.1"/>
    <property type="molecule type" value="Genomic_DNA"/>
</dbReference>
<dbReference type="RefSeq" id="WP_000818618.1">
    <property type="nucleotide sequence ID" value="NC_007606.1"/>
</dbReference>
<dbReference type="RefSeq" id="YP_405144.1">
    <property type="nucleotide sequence ID" value="NC_007606.1"/>
</dbReference>
<dbReference type="SMR" id="Q32AK2"/>
<dbReference type="STRING" id="300267.SDY_3689"/>
<dbReference type="EnsemblBacteria" id="ABB63653">
    <property type="protein sequence ID" value="ABB63653"/>
    <property type="gene ID" value="SDY_3689"/>
</dbReference>
<dbReference type="GeneID" id="93778608"/>
<dbReference type="KEGG" id="sdy:SDY_3689"/>
<dbReference type="PATRIC" id="fig|300267.13.peg.4377"/>
<dbReference type="HOGENOM" id="CLU_057607_2_2_6"/>
<dbReference type="UniPathway" id="UPA00053">
    <property type="reaction ID" value="UER00088"/>
</dbReference>
<dbReference type="Proteomes" id="UP000002716">
    <property type="component" value="Chromosome"/>
</dbReference>
<dbReference type="GO" id="GO:0005829">
    <property type="term" value="C:cytosol"/>
    <property type="evidence" value="ECO:0007669"/>
    <property type="project" value="TreeGrafter"/>
</dbReference>
<dbReference type="GO" id="GO:0005524">
    <property type="term" value="F:ATP binding"/>
    <property type="evidence" value="ECO:0007669"/>
    <property type="project" value="UniProtKB-UniRule"/>
</dbReference>
<dbReference type="GO" id="GO:0000287">
    <property type="term" value="F:magnesium ion binding"/>
    <property type="evidence" value="ECO:0007669"/>
    <property type="project" value="UniProtKB-UniRule"/>
</dbReference>
<dbReference type="GO" id="GO:0004765">
    <property type="term" value="F:shikimate kinase activity"/>
    <property type="evidence" value="ECO:0007669"/>
    <property type="project" value="UniProtKB-UniRule"/>
</dbReference>
<dbReference type="GO" id="GO:0008652">
    <property type="term" value="P:amino acid biosynthetic process"/>
    <property type="evidence" value="ECO:0007669"/>
    <property type="project" value="UniProtKB-KW"/>
</dbReference>
<dbReference type="GO" id="GO:0009073">
    <property type="term" value="P:aromatic amino acid family biosynthetic process"/>
    <property type="evidence" value="ECO:0007669"/>
    <property type="project" value="UniProtKB-KW"/>
</dbReference>
<dbReference type="GO" id="GO:0009423">
    <property type="term" value="P:chorismate biosynthetic process"/>
    <property type="evidence" value="ECO:0007669"/>
    <property type="project" value="UniProtKB-UniRule"/>
</dbReference>
<dbReference type="CDD" id="cd00464">
    <property type="entry name" value="SK"/>
    <property type="match status" value="1"/>
</dbReference>
<dbReference type="FunFam" id="3.40.50.300:FF:000099">
    <property type="entry name" value="Shikimate kinase 1"/>
    <property type="match status" value="1"/>
</dbReference>
<dbReference type="Gene3D" id="3.40.50.300">
    <property type="entry name" value="P-loop containing nucleotide triphosphate hydrolases"/>
    <property type="match status" value="1"/>
</dbReference>
<dbReference type="HAMAP" id="MF_00109">
    <property type="entry name" value="Shikimate_kinase"/>
    <property type="match status" value="1"/>
</dbReference>
<dbReference type="InterPro" id="IPR027417">
    <property type="entry name" value="P-loop_NTPase"/>
</dbReference>
<dbReference type="InterPro" id="IPR031322">
    <property type="entry name" value="Shikimate/glucono_kinase"/>
</dbReference>
<dbReference type="InterPro" id="IPR000623">
    <property type="entry name" value="Shikimate_kinase/TSH1"/>
</dbReference>
<dbReference type="InterPro" id="IPR023000">
    <property type="entry name" value="Shikimate_kinase_CS"/>
</dbReference>
<dbReference type="NCBIfam" id="NF003456">
    <property type="entry name" value="PRK05057.1"/>
    <property type="match status" value="1"/>
</dbReference>
<dbReference type="PANTHER" id="PTHR21087">
    <property type="entry name" value="SHIKIMATE KINASE"/>
    <property type="match status" value="1"/>
</dbReference>
<dbReference type="PANTHER" id="PTHR21087:SF16">
    <property type="entry name" value="SHIKIMATE KINASE 1, CHLOROPLASTIC"/>
    <property type="match status" value="1"/>
</dbReference>
<dbReference type="Pfam" id="PF01202">
    <property type="entry name" value="SKI"/>
    <property type="match status" value="1"/>
</dbReference>
<dbReference type="PRINTS" id="PR01100">
    <property type="entry name" value="SHIKIMTKNASE"/>
</dbReference>
<dbReference type="SUPFAM" id="SSF52540">
    <property type="entry name" value="P-loop containing nucleoside triphosphate hydrolases"/>
    <property type="match status" value="1"/>
</dbReference>
<dbReference type="PROSITE" id="PS01128">
    <property type="entry name" value="SHIKIMATE_KINASE"/>
    <property type="match status" value="1"/>
</dbReference>
<sequence>MAEKRNIFLVGPMGAGKSTIGRQLAQQLNMEFYDSDQEIEKRTGADVGWVFDLEGEEGFRDREEKVINELTEKQGIVLATGGGSVKSRETRNRLSARGVVVYLETTIEKQLARTQRDKKRPLLHVETPPREVLEALANERNPLYEEIADVTIRTDDQSAKVVANQIIHMLESN</sequence>
<keyword id="KW-0028">Amino-acid biosynthesis</keyword>
<keyword id="KW-0057">Aromatic amino acid biosynthesis</keyword>
<keyword id="KW-0067">ATP-binding</keyword>
<keyword id="KW-0963">Cytoplasm</keyword>
<keyword id="KW-0418">Kinase</keyword>
<keyword id="KW-0460">Magnesium</keyword>
<keyword id="KW-0479">Metal-binding</keyword>
<keyword id="KW-0547">Nucleotide-binding</keyword>
<keyword id="KW-1185">Reference proteome</keyword>
<keyword id="KW-0808">Transferase</keyword>
<proteinExistence type="inferred from homology"/>
<reference key="1">
    <citation type="journal article" date="2005" name="Nucleic Acids Res.">
        <title>Genome dynamics and diversity of Shigella species, the etiologic agents of bacillary dysentery.</title>
        <authorList>
            <person name="Yang F."/>
            <person name="Yang J."/>
            <person name="Zhang X."/>
            <person name="Chen L."/>
            <person name="Jiang Y."/>
            <person name="Yan Y."/>
            <person name="Tang X."/>
            <person name="Wang J."/>
            <person name="Xiong Z."/>
            <person name="Dong J."/>
            <person name="Xue Y."/>
            <person name="Zhu Y."/>
            <person name="Xu X."/>
            <person name="Sun L."/>
            <person name="Chen S."/>
            <person name="Nie H."/>
            <person name="Peng J."/>
            <person name="Xu J."/>
            <person name="Wang Y."/>
            <person name="Yuan Z."/>
            <person name="Wen Y."/>
            <person name="Yao Z."/>
            <person name="Shen Y."/>
            <person name="Qiang B."/>
            <person name="Hou Y."/>
            <person name="Yu J."/>
            <person name="Jin Q."/>
        </authorList>
    </citation>
    <scope>NUCLEOTIDE SEQUENCE [LARGE SCALE GENOMIC DNA]</scope>
    <source>
        <strain>Sd197</strain>
    </source>
</reference>
<evidence type="ECO:0000255" key="1">
    <source>
        <dbReference type="HAMAP-Rule" id="MF_00109"/>
    </source>
</evidence>